<sequence>MGMKKSRPRRGSLAFSPRKRAKKLVPKIRSWPADKKVGLQAFPVYKAGTTHALLIENNPKSPNNGQEVFTPVTVLETPDVTVAGIRLYEKTTKGLKALTEVWAEQLDNDLGRKLTLVKKEEKKTADALDAVLEKATEVRVIVHTNPKTTGIPKKKPEVVEIRIGGSSVAERLAYAKEILGKTLAISDVFEAGEIIDTLAITKGKGFQGSVKRWGIKVQFGKHQRKGVGRHTGSIGPWRPRRVMWTVPLPGQMGFHQRTEYNKRILKLGSEGAEITPKGGFLNYGAVKNGYVVVKGTVQGPAKRLVVLRGSVRAAEDKFGLPEVAYISTESKQGN</sequence>
<feature type="chain" id="PRO_1000052081" description="Large ribosomal subunit protein uL3">
    <location>
        <begin position="1"/>
        <end position="334"/>
    </location>
</feature>
<feature type="region of interest" description="Disordered" evidence="2">
    <location>
        <begin position="1"/>
        <end position="20"/>
    </location>
</feature>
<feature type="compositionally biased region" description="Basic residues" evidence="2">
    <location>
        <begin position="1"/>
        <end position="10"/>
    </location>
</feature>
<evidence type="ECO:0000255" key="1">
    <source>
        <dbReference type="HAMAP-Rule" id="MF_01325"/>
    </source>
</evidence>
<evidence type="ECO:0000256" key="2">
    <source>
        <dbReference type="SAM" id="MobiDB-lite"/>
    </source>
</evidence>
<evidence type="ECO:0000305" key="3"/>
<name>RL3_METM7</name>
<dbReference type="EMBL" id="CP000745">
    <property type="protein sequence ID" value="ABR65858.1"/>
    <property type="molecule type" value="Genomic_DNA"/>
</dbReference>
<dbReference type="SMR" id="A6VHD2"/>
<dbReference type="STRING" id="426368.MmarC7_0791"/>
<dbReference type="KEGG" id="mmz:MmarC7_0791"/>
<dbReference type="eggNOG" id="arCOG04070">
    <property type="taxonomic scope" value="Archaea"/>
</dbReference>
<dbReference type="HOGENOM" id="CLU_033361_2_0_2"/>
<dbReference type="OrthoDB" id="6121at2157"/>
<dbReference type="GO" id="GO:0022625">
    <property type="term" value="C:cytosolic large ribosomal subunit"/>
    <property type="evidence" value="ECO:0007669"/>
    <property type="project" value="TreeGrafter"/>
</dbReference>
<dbReference type="GO" id="GO:0019843">
    <property type="term" value="F:rRNA binding"/>
    <property type="evidence" value="ECO:0007669"/>
    <property type="project" value="UniProtKB-UniRule"/>
</dbReference>
<dbReference type="GO" id="GO:0003735">
    <property type="term" value="F:structural constituent of ribosome"/>
    <property type="evidence" value="ECO:0007669"/>
    <property type="project" value="InterPro"/>
</dbReference>
<dbReference type="GO" id="GO:0006412">
    <property type="term" value="P:translation"/>
    <property type="evidence" value="ECO:0007669"/>
    <property type="project" value="UniProtKB-UniRule"/>
</dbReference>
<dbReference type="Gene3D" id="3.30.1430.10">
    <property type="match status" value="1"/>
</dbReference>
<dbReference type="Gene3D" id="4.10.960.10">
    <property type="entry name" value="Ribosomal protein L3, domain 3"/>
    <property type="match status" value="1"/>
</dbReference>
<dbReference type="Gene3D" id="2.40.30.10">
    <property type="entry name" value="Translation factors"/>
    <property type="match status" value="1"/>
</dbReference>
<dbReference type="HAMAP" id="MF_01325_A">
    <property type="entry name" value="Ribosomal_uL3_A"/>
    <property type="match status" value="1"/>
</dbReference>
<dbReference type="InterPro" id="IPR045077">
    <property type="entry name" value="L3_arc_euk"/>
</dbReference>
<dbReference type="InterPro" id="IPR044892">
    <property type="entry name" value="Ribosomal_L3_dom_3_arc_sf"/>
</dbReference>
<dbReference type="InterPro" id="IPR000597">
    <property type="entry name" value="Ribosomal_uL3"/>
</dbReference>
<dbReference type="InterPro" id="IPR019928">
    <property type="entry name" value="Ribosomal_uL3_arc"/>
</dbReference>
<dbReference type="InterPro" id="IPR019926">
    <property type="entry name" value="Ribosomal_uL3_CS"/>
</dbReference>
<dbReference type="InterPro" id="IPR009000">
    <property type="entry name" value="Transl_B-barrel_sf"/>
</dbReference>
<dbReference type="NCBIfam" id="TIGR03626">
    <property type="entry name" value="L3_arch"/>
    <property type="match status" value="1"/>
</dbReference>
<dbReference type="NCBIfam" id="NF003261">
    <property type="entry name" value="PRK04231.1"/>
    <property type="match status" value="1"/>
</dbReference>
<dbReference type="PANTHER" id="PTHR11363">
    <property type="entry name" value="60S RIBOSOMAL PROTEIN L3-RELATED"/>
    <property type="match status" value="1"/>
</dbReference>
<dbReference type="PANTHER" id="PTHR11363:SF5">
    <property type="entry name" value="LARGE RIBOSOMAL SUBUNIT PROTEIN UL3"/>
    <property type="match status" value="1"/>
</dbReference>
<dbReference type="Pfam" id="PF00297">
    <property type="entry name" value="Ribosomal_L3"/>
    <property type="match status" value="1"/>
</dbReference>
<dbReference type="SUPFAM" id="SSF50447">
    <property type="entry name" value="Translation proteins"/>
    <property type="match status" value="1"/>
</dbReference>
<dbReference type="PROSITE" id="PS00474">
    <property type="entry name" value="RIBOSOMAL_L3"/>
    <property type="match status" value="1"/>
</dbReference>
<accession>A6VHD2</accession>
<reference key="1">
    <citation type="submission" date="2007-06" db="EMBL/GenBank/DDBJ databases">
        <title>Complete sequence of Methanococcus maripaludis C7.</title>
        <authorList>
            <consortium name="US DOE Joint Genome Institute"/>
            <person name="Copeland A."/>
            <person name="Lucas S."/>
            <person name="Lapidus A."/>
            <person name="Barry K."/>
            <person name="Glavina del Rio T."/>
            <person name="Dalin E."/>
            <person name="Tice H."/>
            <person name="Pitluck S."/>
            <person name="Clum A."/>
            <person name="Schmutz J."/>
            <person name="Larimer F."/>
            <person name="Land M."/>
            <person name="Hauser L."/>
            <person name="Kyrpides N."/>
            <person name="Anderson I."/>
            <person name="Sieprawska-Lupa M."/>
            <person name="Whitman W.B."/>
            <person name="Richardson P."/>
        </authorList>
    </citation>
    <scope>NUCLEOTIDE SEQUENCE [LARGE SCALE GENOMIC DNA]</scope>
    <source>
        <strain>C7 / ATCC BAA-1331</strain>
    </source>
</reference>
<organism>
    <name type="scientific">Methanococcus maripaludis (strain C7 / ATCC BAA-1331)</name>
    <dbReference type="NCBI Taxonomy" id="426368"/>
    <lineage>
        <taxon>Archaea</taxon>
        <taxon>Methanobacteriati</taxon>
        <taxon>Methanobacteriota</taxon>
        <taxon>Methanomada group</taxon>
        <taxon>Methanococci</taxon>
        <taxon>Methanococcales</taxon>
        <taxon>Methanococcaceae</taxon>
        <taxon>Methanococcus</taxon>
    </lineage>
</organism>
<keyword id="KW-0687">Ribonucleoprotein</keyword>
<keyword id="KW-0689">Ribosomal protein</keyword>
<keyword id="KW-0694">RNA-binding</keyword>
<keyword id="KW-0699">rRNA-binding</keyword>
<protein>
    <recommendedName>
        <fullName evidence="1">Large ribosomal subunit protein uL3</fullName>
    </recommendedName>
    <alternativeName>
        <fullName evidence="3">50S ribosomal protein L3</fullName>
    </alternativeName>
</protein>
<comment type="function">
    <text evidence="1">One of the primary rRNA binding proteins, it binds directly near the 3'-end of the 23S rRNA, where it nucleates assembly of the 50S subunit.</text>
</comment>
<comment type="subunit">
    <text evidence="1">Part of the 50S ribosomal subunit. Forms a cluster with proteins L14 and L24e.</text>
</comment>
<comment type="similarity">
    <text evidence="1">Belongs to the universal ribosomal protein uL3 family.</text>
</comment>
<gene>
    <name evidence="1" type="primary">rpl3</name>
    <name type="ordered locus">MmarC7_0791</name>
</gene>
<proteinExistence type="inferred from homology"/>